<proteinExistence type="inferred from homology"/>
<comment type="function">
    <text evidence="1">May be involved in telomere capping.</text>
</comment>
<comment type="similarity">
    <text evidence="2">Belongs to the MTC2 family.</text>
</comment>
<gene>
    <name type="primary">MTC2</name>
    <name type="ORF">AWRI1631_111240</name>
</gene>
<accession>B5VM60</accession>
<reference key="1">
    <citation type="journal article" date="2008" name="FEMS Yeast Res.">
        <title>Comparative genome analysis of a Saccharomyces cerevisiae wine strain.</title>
        <authorList>
            <person name="Borneman A.R."/>
            <person name="Forgan A.H."/>
            <person name="Pretorius I.S."/>
            <person name="Chambers P.J."/>
        </authorList>
    </citation>
    <scope>NUCLEOTIDE SEQUENCE [LARGE SCALE GENOMIC DNA]</scope>
    <source>
        <strain>AWRI1631</strain>
    </source>
</reference>
<dbReference type="EMBL" id="ABSV01001463">
    <property type="protein sequence ID" value="EDZ70982.1"/>
    <property type="molecule type" value="Genomic_DNA"/>
</dbReference>
<dbReference type="Proteomes" id="UP000008988">
    <property type="component" value="Unassembled WGS sequence"/>
</dbReference>
<protein>
    <recommendedName>
        <fullName>Maintenance of telomere capping protein 2</fullName>
    </recommendedName>
</protein>
<sequence length="357" mass="39808">MGDHNLPDFQTCLKFSVTAKKSFLCMYRDSVSKEKLASSMPSTCDIQLKRAINDAYPGGGIKVTVLNSTTASLDSLATTHVKEFEIVIIPDINSLLQPDQAKLVKIMRDCTVAIEKAQSTRIFIGVVHWNNPVQPSGAAKDGDEAGKPAPKTRIFLPTSLRMGAWLKHKFWFACAPPYLDFESSTESSINTRANNSIGMAEEEKQEPESKRSIILNEEANLNDVFVGSTVRRYILDIMVHLRTHRLTYNAKAGGVYTNSLDDVVLLSRLIGLHSGKMFVSPSHVKEASRWYFPMHLELVQRSSMDSSLLYGSDPNLVDEMLEKLAKIKCEEVNEFENPLFLESLVVKNVLSKVVPPV</sequence>
<organism>
    <name type="scientific">Saccharomyces cerevisiae (strain AWRI1631)</name>
    <name type="common">Baker's yeast</name>
    <dbReference type="NCBI Taxonomy" id="545124"/>
    <lineage>
        <taxon>Eukaryota</taxon>
        <taxon>Fungi</taxon>
        <taxon>Dikarya</taxon>
        <taxon>Ascomycota</taxon>
        <taxon>Saccharomycotina</taxon>
        <taxon>Saccharomycetes</taxon>
        <taxon>Saccharomycetales</taxon>
        <taxon>Saccharomycetaceae</taxon>
        <taxon>Saccharomyces</taxon>
    </lineage>
</organism>
<feature type="chain" id="PRO_0000407767" description="Maintenance of telomere capping protein 2">
    <location>
        <begin position="1"/>
        <end position="357"/>
    </location>
</feature>
<evidence type="ECO:0000250" key="1"/>
<evidence type="ECO:0000305" key="2"/>
<name>MTC2_YEAS6</name>